<dbReference type="EC" id="5.4.99.12" evidence="1"/>
<dbReference type="EMBL" id="CU928158">
    <property type="protein sequence ID" value="CAQ88381.1"/>
    <property type="molecule type" value="Genomic_DNA"/>
</dbReference>
<dbReference type="RefSeq" id="WP_001283600.1">
    <property type="nucleotide sequence ID" value="NC_011740.1"/>
</dbReference>
<dbReference type="SMR" id="B7LLF2"/>
<dbReference type="GeneID" id="75058094"/>
<dbReference type="KEGG" id="efe:EFER_0845"/>
<dbReference type="HOGENOM" id="CLU_014673_0_2_6"/>
<dbReference type="OrthoDB" id="9811823at2"/>
<dbReference type="Proteomes" id="UP000000745">
    <property type="component" value="Chromosome"/>
</dbReference>
<dbReference type="GO" id="GO:0003723">
    <property type="term" value="F:RNA binding"/>
    <property type="evidence" value="ECO:0007669"/>
    <property type="project" value="InterPro"/>
</dbReference>
<dbReference type="GO" id="GO:0160147">
    <property type="term" value="F:tRNA pseudouridine(38-40) synthase activity"/>
    <property type="evidence" value="ECO:0007669"/>
    <property type="project" value="UniProtKB-EC"/>
</dbReference>
<dbReference type="GO" id="GO:0031119">
    <property type="term" value="P:tRNA pseudouridine synthesis"/>
    <property type="evidence" value="ECO:0007669"/>
    <property type="project" value="UniProtKB-UniRule"/>
</dbReference>
<dbReference type="CDD" id="cd02570">
    <property type="entry name" value="PseudoU_synth_EcTruA"/>
    <property type="match status" value="1"/>
</dbReference>
<dbReference type="FunFam" id="3.30.70.580:FF:000001">
    <property type="entry name" value="tRNA pseudouridine synthase A"/>
    <property type="match status" value="1"/>
</dbReference>
<dbReference type="FunFam" id="3.30.70.660:FF:000001">
    <property type="entry name" value="tRNA pseudouridine synthase A"/>
    <property type="match status" value="1"/>
</dbReference>
<dbReference type="Gene3D" id="3.30.70.660">
    <property type="entry name" value="Pseudouridine synthase I, catalytic domain, C-terminal subdomain"/>
    <property type="match status" value="1"/>
</dbReference>
<dbReference type="Gene3D" id="3.30.70.580">
    <property type="entry name" value="Pseudouridine synthase I, catalytic domain, N-terminal subdomain"/>
    <property type="match status" value="1"/>
</dbReference>
<dbReference type="HAMAP" id="MF_00171">
    <property type="entry name" value="TruA"/>
    <property type="match status" value="1"/>
</dbReference>
<dbReference type="InterPro" id="IPR020103">
    <property type="entry name" value="PsdUridine_synth_cat_dom_sf"/>
</dbReference>
<dbReference type="InterPro" id="IPR001406">
    <property type="entry name" value="PsdUridine_synth_TruA"/>
</dbReference>
<dbReference type="InterPro" id="IPR020097">
    <property type="entry name" value="PsdUridine_synth_TruA_a/b_dom"/>
</dbReference>
<dbReference type="InterPro" id="IPR020095">
    <property type="entry name" value="PsdUridine_synth_TruA_C"/>
</dbReference>
<dbReference type="InterPro" id="IPR020094">
    <property type="entry name" value="TruA/RsuA/RluB/E/F_N"/>
</dbReference>
<dbReference type="NCBIfam" id="TIGR00071">
    <property type="entry name" value="hisT_truA"/>
    <property type="match status" value="1"/>
</dbReference>
<dbReference type="PANTHER" id="PTHR11142">
    <property type="entry name" value="PSEUDOURIDYLATE SYNTHASE"/>
    <property type="match status" value="1"/>
</dbReference>
<dbReference type="PANTHER" id="PTHR11142:SF0">
    <property type="entry name" value="TRNA PSEUDOURIDINE SYNTHASE-LIKE 1"/>
    <property type="match status" value="1"/>
</dbReference>
<dbReference type="Pfam" id="PF01416">
    <property type="entry name" value="PseudoU_synth_1"/>
    <property type="match status" value="2"/>
</dbReference>
<dbReference type="PIRSF" id="PIRSF001430">
    <property type="entry name" value="tRNA_psdUrid_synth"/>
    <property type="match status" value="1"/>
</dbReference>
<dbReference type="SUPFAM" id="SSF55120">
    <property type="entry name" value="Pseudouridine synthase"/>
    <property type="match status" value="1"/>
</dbReference>
<reference key="1">
    <citation type="journal article" date="2009" name="PLoS Genet.">
        <title>Organised genome dynamics in the Escherichia coli species results in highly diverse adaptive paths.</title>
        <authorList>
            <person name="Touchon M."/>
            <person name="Hoede C."/>
            <person name="Tenaillon O."/>
            <person name="Barbe V."/>
            <person name="Baeriswyl S."/>
            <person name="Bidet P."/>
            <person name="Bingen E."/>
            <person name="Bonacorsi S."/>
            <person name="Bouchier C."/>
            <person name="Bouvet O."/>
            <person name="Calteau A."/>
            <person name="Chiapello H."/>
            <person name="Clermont O."/>
            <person name="Cruveiller S."/>
            <person name="Danchin A."/>
            <person name="Diard M."/>
            <person name="Dossat C."/>
            <person name="Karoui M.E."/>
            <person name="Frapy E."/>
            <person name="Garry L."/>
            <person name="Ghigo J.M."/>
            <person name="Gilles A.M."/>
            <person name="Johnson J."/>
            <person name="Le Bouguenec C."/>
            <person name="Lescat M."/>
            <person name="Mangenot S."/>
            <person name="Martinez-Jehanne V."/>
            <person name="Matic I."/>
            <person name="Nassif X."/>
            <person name="Oztas S."/>
            <person name="Petit M.A."/>
            <person name="Pichon C."/>
            <person name="Rouy Z."/>
            <person name="Ruf C.S."/>
            <person name="Schneider D."/>
            <person name="Tourret J."/>
            <person name="Vacherie B."/>
            <person name="Vallenet D."/>
            <person name="Medigue C."/>
            <person name="Rocha E.P.C."/>
            <person name="Denamur E."/>
        </authorList>
    </citation>
    <scope>NUCLEOTIDE SEQUENCE [LARGE SCALE GENOMIC DNA]</scope>
    <source>
        <strain>ATCC 35469 / DSM 13698 / BCRC 15582 / CCUG 18766 / IAM 14443 / JCM 21226 / LMG 7866 / NBRC 102419 / NCTC 12128 / CDC 0568-73</strain>
    </source>
</reference>
<organism>
    <name type="scientific">Escherichia fergusonii (strain ATCC 35469 / DSM 13698 / CCUG 18766 / IAM 14443 / JCM 21226 / LMG 7866 / NBRC 102419 / NCTC 12128 / CDC 0568-73)</name>
    <dbReference type="NCBI Taxonomy" id="585054"/>
    <lineage>
        <taxon>Bacteria</taxon>
        <taxon>Pseudomonadati</taxon>
        <taxon>Pseudomonadota</taxon>
        <taxon>Gammaproteobacteria</taxon>
        <taxon>Enterobacterales</taxon>
        <taxon>Enterobacteriaceae</taxon>
        <taxon>Escherichia</taxon>
    </lineage>
</organism>
<proteinExistence type="inferred from homology"/>
<protein>
    <recommendedName>
        <fullName evidence="1">tRNA pseudouridine synthase A</fullName>
        <ecNumber evidence="1">5.4.99.12</ecNumber>
    </recommendedName>
    <alternativeName>
        <fullName evidence="1">tRNA pseudouridine(38-40) synthase</fullName>
    </alternativeName>
    <alternativeName>
        <fullName evidence="1">tRNA pseudouridylate synthase I</fullName>
    </alternativeName>
    <alternativeName>
        <fullName evidence="1">tRNA-uridine isomerase I</fullName>
    </alternativeName>
</protein>
<accession>B7LLF2</accession>
<gene>
    <name evidence="1" type="primary">truA</name>
    <name type="ordered locus">EFER_0845</name>
</gene>
<sequence>MSDQQQPPVYKIALGIEYDGSRYYGWQRQNEVRSVQEKLEKALSQVANEPITVFCAGRTDAGVHGTGQVVHFETTAQRKDAAWTLGVNANLPGDIAVRWVKAVPDDFHARFSATARRYRYIIYNHRLRPAVLSKGVTHFYEPLDAERMHRAAQCLLGENDFTSFRAVQCQSRTPWRNVMHINVTRHGPYVVVDIKANAFVHHMVRNIVGSLMEVGANNQPESWIAELLAAKDRTLAAATAKAEGLYLVAVDYPDRFDLPKPPMGPLFLAD</sequence>
<comment type="function">
    <text evidence="1">Formation of pseudouridine at positions 38, 39 and 40 in the anticodon stem and loop of transfer RNAs.</text>
</comment>
<comment type="catalytic activity">
    <reaction evidence="1">
        <text>uridine(38/39/40) in tRNA = pseudouridine(38/39/40) in tRNA</text>
        <dbReference type="Rhea" id="RHEA:22376"/>
        <dbReference type="Rhea" id="RHEA-COMP:10085"/>
        <dbReference type="Rhea" id="RHEA-COMP:10087"/>
        <dbReference type="ChEBI" id="CHEBI:65314"/>
        <dbReference type="ChEBI" id="CHEBI:65315"/>
        <dbReference type="EC" id="5.4.99.12"/>
    </reaction>
</comment>
<comment type="subunit">
    <text evidence="1">Homodimer.</text>
</comment>
<comment type="similarity">
    <text evidence="1">Belongs to the tRNA pseudouridine synthase TruA family.</text>
</comment>
<feature type="chain" id="PRO_1000194557" description="tRNA pseudouridine synthase A">
    <location>
        <begin position="1"/>
        <end position="270"/>
    </location>
</feature>
<feature type="region of interest" description="RNA binding" evidence="1">
    <location>
        <begin position="107"/>
        <end position="111"/>
    </location>
</feature>
<feature type="region of interest" description="Interaction with tRNA" evidence="1">
    <location>
        <begin position="168"/>
        <end position="172"/>
    </location>
</feature>
<feature type="active site" description="Nucleophile" evidence="1">
    <location>
        <position position="60"/>
    </location>
</feature>
<feature type="binding site" evidence="1">
    <location>
        <position position="118"/>
    </location>
    <ligand>
        <name>substrate</name>
    </ligand>
</feature>
<feature type="site" description="Interaction with tRNA; Important for base-flipping" evidence="1">
    <location>
        <position position="58"/>
    </location>
</feature>
<feature type="site" description="Interaction with tRNA" evidence="1">
    <location>
        <position position="78"/>
    </location>
</feature>
<feature type="site" description="Interaction with tRNA" evidence="1">
    <location>
        <position position="110"/>
    </location>
</feature>
<feature type="site" description="Interaction with tRNA" evidence="1">
    <location>
        <position position="126"/>
    </location>
</feature>
<feature type="site" description="Interaction with tRNA" evidence="1">
    <location>
        <position position="139"/>
    </location>
</feature>
<name>TRUA_ESCF3</name>
<keyword id="KW-0413">Isomerase</keyword>
<keyword id="KW-0819">tRNA processing</keyword>
<evidence type="ECO:0000255" key="1">
    <source>
        <dbReference type="HAMAP-Rule" id="MF_00171"/>
    </source>
</evidence>